<accession>P02254</accession>
<feature type="chain" id="PRO_0000195937" description="Histone H1">
    <location>
        <begin position="1"/>
        <end position="194"/>
    </location>
</feature>
<feature type="domain" description="H15" evidence="1">
    <location>
        <begin position="27"/>
        <end position="100"/>
    </location>
</feature>
<feature type="region of interest" description="Disordered" evidence="2">
    <location>
        <begin position="1"/>
        <end position="31"/>
    </location>
</feature>
<feature type="region of interest" description="Disordered" evidence="2">
    <location>
        <begin position="105"/>
        <end position="194"/>
    </location>
</feature>
<feature type="compositionally biased region" description="Low complexity" evidence="2">
    <location>
        <begin position="1"/>
        <end position="14"/>
    </location>
</feature>
<feature type="compositionally biased region" description="Basic residues" evidence="2">
    <location>
        <begin position="15"/>
        <end position="26"/>
    </location>
</feature>
<feature type="compositionally biased region" description="Basic residues" evidence="2">
    <location>
        <begin position="116"/>
        <end position="194"/>
    </location>
</feature>
<feature type="modified residue" description="N-acetylalanine; partial" evidence="3">
    <location>
        <position position="1"/>
    </location>
</feature>
<feature type="modified residue" description="Phosphoserine" evidence="4">
    <location>
        <position position="145"/>
    </location>
</feature>
<feature type="modified residue" description="Phosphoserine" evidence="4">
    <location>
        <position position="161"/>
    </location>
</feature>
<feature type="modified residue" description="Phosphoserine" evidence="4">
    <location>
        <position position="182"/>
    </location>
</feature>
<feature type="sequence variant" description="In minor component.">
    <original>A</original>
    <variation>I</variation>
    <location>
        <position position="35"/>
    </location>
</feature>
<keyword id="KW-0007">Acetylation</keyword>
<keyword id="KW-0158">Chromosome</keyword>
<keyword id="KW-0903">Direct protein sequencing</keyword>
<keyword id="KW-0238">DNA-binding</keyword>
<keyword id="KW-0539">Nucleus</keyword>
<keyword id="KW-0597">Phosphoprotein</keyword>
<keyword id="KW-1185">Reference proteome</keyword>
<comment type="function">
    <text>Histones H1 are necessary for the condensation of nucleosome chains into higher-order structures.</text>
</comment>
<comment type="subcellular location">
    <subcellularLocation>
        <location>Nucleus</location>
    </subcellularLocation>
    <subcellularLocation>
        <location>Chromosome</location>
    </subcellularLocation>
</comment>
<comment type="similarity">
    <text evidence="1">Belongs to the histone H1/H5 family.</text>
</comment>
<organism>
    <name type="scientific">Salmo trutta</name>
    <name type="common">Brown trout</name>
    <dbReference type="NCBI Taxonomy" id="8032"/>
    <lineage>
        <taxon>Eukaryota</taxon>
        <taxon>Metazoa</taxon>
        <taxon>Chordata</taxon>
        <taxon>Craniata</taxon>
        <taxon>Vertebrata</taxon>
        <taxon>Euteleostomi</taxon>
        <taxon>Actinopterygii</taxon>
        <taxon>Neopterygii</taxon>
        <taxon>Teleostei</taxon>
        <taxon>Protacanthopterygii</taxon>
        <taxon>Salmoniformes</taxon>
        <taxon>Salmonidae</taxon>
        <taxon>Salmoninae</taxon>
        <taxon>Salmo</taxon>
    </lineage>
</organism>
<name>H1_SALTR</name>
<reference key="1">
    <citation type="journal article" date="1977" name="Eur. J. Biochem.">
        <title>The amino-acid sequence of trout-testis histone H1.</title>
        <authorList>
            <person name="McLeod A.R."/>
            <person name="Wong N.C.W."/>
            <person name="Dixon G.H."/>
        </authorList>
    </citation>
    <scope>PROTEIN SEQUENCE</scope>
    <scope>ACETYLATION AT ALA-1</scope>
    <scope>PHOSPHORYLATION AT SER-145; SER-161 AND SER-182</scope>
</reference>
<protein>
    <recommendedName>
        <fullName>Histone H1</fullName>
    </recommendedName>
</protein>
<sequence>AEVAPAPAAAAPAKAPKKKAAAKPKKSGPAVGELAGKAVAASKERSGVSLAALKKSLAAGGYDVEKNNSRVKIAVKSLVTKGTLVETKGTGASGSFKLNKKAVEAKKPAKKAAAPKAKKVAAKKPAAAKKPKKVAAKKAVAAKKSPKKAKKPATPKKAAKSPKKATKAAKPKAAKPKKAAKSPKKVKKPAAAKK</sequence>
<dbReference type="SMR" id="P02254"/>
<dbReference type="FunCoup" id="P02254">
    <property type="interactions" value="2004"/>
</dbReference>
<dbReference type="iPTMnet" id="P02254"/>
<dbReference type="InParanoid" id="P02254"/>
<dbReference type="Proteomes" id="UP000472277">
    <property type="component" value="Unplaced"/>
</dbReference>
<dbReference type="GO" id="GO:0000786">
    <property type="term" value="C:nucleosome"/>
    <property type="evidence" value="ECO:0007669"/>
    <property type="project" value="InterPro"/>
</dbReference>
<dbReference type="GO" id="GO:0005634">
    <property type="term" value="C:nucleus"/>
    <property type="evidence" value="ECO:0007669"/>
    <property type="project" value="UniProtKB-SubCell"/>
</dbReference>
<dbReference type="GO" id="GO:0003677">
    <property type="term" value="F:DNA binding"/>
    <property type="evidence" value="ECO:0007669"/>
    <property type="project" value="UniProtKB-KW"/>
</dbReference>
<dbReference type="GO" id="GO:0030527">
    <property type="term" value="F:structural constituent of chromatin"/>
    <property type="evidence" value="ECO:0007669"/>
    <property type="project" value="InterPro"/>
</dbReference>
<dbReference type="GO" id="GO:0006334">
    <property type="term" value="P:nucleosome assembly"/>
    <property type="evidence" value="ECO:0007669"/>
    <property type="project" value="InterPro"/>
</dbReference>
<dbReference type="CDD" id="cd00073">
    <property type="entry name" value="H15"/>
    <property type="match status" value="1"/>
</dbReference>
<dbReference type="FunFam" id="1.10.10.10:FF:000075">
    <property type="entry name" value="Histone H1 like"/>
    <property type="match status" value="1"/>
</dbReference>
<dbReference type="Gene3D" id="1.10.10.10">
    <property type="entry name" value="Winged helix-like DNA-binding domain superfamily/Winged helix DNA-binding domain"/>
    <property type="match status" value="1"/>
</dbReference>
<dbReference type="InterPro" id="IPR005819">
    <property type="entry name" value="H1/H5"/>
</dbReference>
<dbReference type="InterPro" id="IPR005818">
    <property type="entry name" value="Histone_H1/H5_H15"/>
</dbReference>
<dbReference type="InterPro" id="IPR036388">
    <property type="entry name" value="WH-like_DNA-bd_sf"/>
</dbReference>
<dbReference type="InterPro" id="IPR036390">
    <property type="entry name" value="WH_DNA-bd_sf"/>
</dbReference>
<dbReference type="Pfam" id="PF00538">
    <property type="entry name" value="Linker_histone"/>
    <property type="match status" value="1"/>
</dbReference>
<dbReference type="PRINTS" id="PR00624">
    <property type="entry name" value="HISTONEH5"/>
</dbReference>
<dbReference type="SMART" id="SM00526">
    <property type="entry name" value="H15"/>
    <property type="match status" value="1"/>
</dbReference>
<dbReference type="SUPFAM" id="SSF46785">
    <property type="entry name" value="Winged helix' DNA-binding domain"/>
    <property type="match status" value="1"/>
</dbReference>
<dbReference type="PROSITE" id="PS51504">
    <property type="entry name" value="H15"/>
    <property type="match status" value="1"/>
</dbReference>
<proteinExistence type="evidence at protein level"/>
<evidence type="ECO:0000255" key="1">
    <source>
        <dbReference type="PROSITE-ProRule" id="PRU00837"/>
    </source>
</evidence>
<evidence type="ECO:0000256" key="2">
    <source>
        <dbReference type="SAM" id="MobiDB-lite"/>
    </source>
</evidence>
<evidence type="ECO:0000269" key="3">
    <source>
    </source>
</evidence>
<evidence type="ECO:0000305" key="4">
    <source>
    </source>
</evidence>